<protein>
    <recommendedName>
        <fullName>Uncharacterized protein y4kK</fullName>
    </recommendedName>
</protein>
<organism>
    <name type="scientific">Sinorhizobium fredii (strain NBRC 101917 / NGR234)</name>
    <dbReference type="NCBI Taxonomy" id="394"/>
    <lineage>
        <taxon>Bacteria</taxon>
        <taxon>Pseudomonadati</taxon>
        <taxon>Pseudomonadota</taxon>
        <taxon>Alphaproteobacteria</taxon>
        <taxon>Hyphomicrobiales</taxon>
        <taxon>Rhizobiaceae</taxon>
        <taxon>Sinorhizobium/Ensifer group</taxon>
        <taxon>Sinorhizobium</taxon>
    </lineage>
</organism>
<keyword id="KW-0614">Plasmid</keyword>
<keyword id="KW-1185">Reference proteome</keyword>
<proteinExistence type="predicted"/>
<dbReference type="EMBL" id="U00090">
    <property type="protein sequence ID" value="AAB91742.1"/>
    <property type="molecule type" value="Genomic_DNA"/>
</dbReference>
<dbReference type="RefSeq" id="NP_443940.1">
    <property type="nucleotide sequence ID" value="NC_000914.2"/>
</dbReference>
<dbReference type="RefSeq" id="WP_010875310.1">
    <property type="nucleotide sequence ID" value="NC_000914.2"/>
</dbReference>
<dbReference type="KEGG" id="rhi:NGR_a02850"/>
<dbReference type="eggNOG" id="COG1404">
    <property type="taxonomic scope" value="Bacteria"/>
</dbReference>
<dbReference type="HOGENOM" id="CLU_891019_0_0_5"/>
<dbReference type="OrthoDB" id="9768989at2"/>
<dbReference type="Proteomes" id="UP000001054">
    <property type="component" value="Plasmid pNGR234a"/>
</dbReference>
<name>Y4KK_SINFN</name>
<accession>P55529</accession>
<evidence type="ECO:0000256" key="1">
    <source>
        <dbReference type="SAM" id="MobiDB-lite"/>
    </source>
</evidence>
<geneLocation type="plasmid">
    <name>sym pNGR234a</name>
</geneLocation>
<reference key="1">
    <citation type="journal article" date="1997" name="Nature">
        <title>Molecular basis of symbiosis between Rhizobium and legumes.</title>
        <authorList>
            <person name="Freiberg C.A."/>
            <person name="Fellay R."/>
            <person name="Bairoch A."/>
            <person name="Broughton W.J."/>
            <person name="Rosenthal A."/>
            <person name="Perret X."/>
        </authorList>
    </citation>
    <scope>NUCLEOTIDE SEQUENCE [LARGE SCALE GENOMIC DNA]</scope>
    <source>
        <strain>NBRC 101917 / NGR234</strain>
    </source>
</reference>
<reference key="2">
    <citation type="journal article" date="2009" name="Appl. Environ. Microbiol.">
        <title>Rhizobium sp. strain NGR234 possesses a remarkable number of secretion systems.</title>
        <authorList>
            <person name="Schmeisser C."/>
            <person name="Liesegang H."/>
            <person name="Krysciak D."/>
            <person name="Bakkou N."/>
            <person name="Le Quere A."/>
            <person name="Wollherr A."/>
            <person name="Heinemeyer I."/>
            <person name="Morgenstern B."/>
            <person name="Pommerening-Roeser A."/>
            <person name="Flores M."/>
            <person name="Palacios R."/>
            <person name="Brenner S."/>
            <person name="Gottschalk G."/>
            <person name="Schmitz R.A."/>
            <person name="Broughton W.J."/>
            <person name="Perret X."/>
            <person name="Strittmatter A.W."/>
            <person name="Streit W.R."/>
        </authorList>
    </citation>
    <scope>NUCLEOTIDE SEQUENCE [LARGE SCALE GENOMIC DNA]</scope>
    <source>
        <strain>NBRC 101917 / NGR234</strain>
    </source>
</reference>
<gene>
    <name type="ordered locus">NGR_a02850</name>
    <name type="ORF">y4kK</name>
</gene>
<feature type="chain" id="PRO_0000200891" description="Uncharacterized protein y4kK">
    <location>
        <begin position="1"/>
        <end position="312"/>
    </location>
</feature>
<feature type="region of interest" description="Disordered" evidence="1">
    <location>
        <begin position="1"/>
        <end position="39"/>
    </location>
</feature>
<feature type="compositionally biased region" description="Basic and acidic residues" evidence="1">
    <location>
        <begin position="1"/>
        <end position="17"/>
    </location>
</feature>
<feature type="compositionally biased region" description="Basic and acidic residues" evidence="1">
    <location>
        <begin position="28"/>
        <end position="39"/>
    </location>
</feature>
<sequence>MAKYDHLELVRLPEQLERRKHGGGSPPPDRDGPRHSAKLRDELNAARDEQRRRRKPEFVNPALILRVQMTGALQEADWEQLGLTVLSSDADRTLVLFASNDEMAEFRTRLDAYQRGAPAGQKNAPYNNFIGGIETIGSVEPRDRIGIRFREDGLVEMADFQDGQAYLIDIEIWDLGERRLRERKLDDIVRYIEARGAEVFDQYVGPSITMLRARLNGVLVRTLLTIEEVASVDLPPTPGIVTAEAMDMVLAEAPPLNTVDQTAPVIGIIDSGLNAHPFLDGIIAGCGFRQSPDRISGNLRTQFSVIPGQRFR</sequence>